<reference key="1">
    <citation type="journal article" date="2005" name="J. Bacteriol.">
        <title>Insights on evolution of virulence and resistance from the complete genome analysis of an early methicillin-resistant Staphylococcus aureus strain and a biofilm-producing methicillin-resistant Staphylococcus epidermidis strain.</title>
        <authorList>
            <person name="Gill S.R."/>
            <person name="Fouts D.E."/>
            <person name="Archer G.L."/>
            <person name="Mongodin E.F."/>
            <person name="DeBoy R.T."/>
            <person name="Ravel J."/>
            <person name="Paulsen I.T."/>
            <person name="Kolonay J.F."/>
            <person name="Brinkac L.M."/>
            <person name="Beanan M.J."/>
            <person name="Dodson R.J."/>
            <person name="Daugherty S.C."/>
            <person name="Madupu R."/>
            <person name="Angiuoli S.V."/>
            <person name="Durkin A.S."/>
            <person name="Haft D.H."/>
            <person name="Vamathevan J.J."/>
            <person name="Khouri H."/>
            <person name="Utterback T.R."/>
            <person name="Lee C."/>
            <person name="Dimitrov G."/>
            <person name="Jiang L."/>
            <person name="Qin H."/>
            <person name="Weidman J."/>
            <person name="Tran K."/>
            <person name="Kang K.H."/>
            <person name="Hance I.R."/>
            <person name="Nelson K.E."/>
            <person name="Fraser C.M."/>
        </authorList>
    </citation>
    <scope>NUCLEOTIDE SEQUENCE [LARGE SCALE GENOMIC DNA]</scope>
    <source>
        <strain>COL</strain>
    </source>
</reference>
<sequence length="318" mass="37088">MNYQVLLYYKYMTIDDPEQFAQDHLAFCKAHHLKGRILVSTEGINGTLSGTKEETEQYMAHMHADERFKDMVFKIDEAEGHAFKKMHVRPRKEIVALDLEDDVDPRHTTGQYLSPVEFRKALEDDDTVIIDARNDYEFDLGHFRGAIRPNITRFRDLPDWIKENKALFADKKVVTYCTGGIRCEKFSGWLLKEGFEDVAQLHGGIATYGKDPETKSEYWDGKMYVFDDRISVDINQVEKTIIGKDWFDGKPCERYINCANPECNKQILVSEENETKYLGACSYECAKHERNRYVQANNISDNEWQQRLTNFDDLHQHA</sequence>
<dbReference type="EC" id="1.14.-.-" evidence="1"/>
<dbReference type="EMBL" id="CP000046">
    <property type="protein sequence ID" value="AAW37361.1"/>
    <property type="molecule type" value="Genomic_DNA"/>
</dbReference>
<dbReference type="RefSeq" id="WP_001109274.1">
    <property type="nucleotide sequence ID" value="NC_002951.2"/>
</dbReference>
<dbReference type="SMR" id="Q5HCK8"/>
<dbReference type="KEGG" id="sac:SACOL2713"/>
<dbReference type="HOGENOM" id="CLU_038878_1_0_9"/>
<dbReference type="Proteomes" id="UP000000530">
    <property type="component" value="Chromosome"/>
</dbReference>
<dbReference type="GO" id="GO:0016705">
    <property type="term" value="F:oxidoreductase activity, acting on paired donors, with incorporation or reduction of molecular oxygen"/>
    <property type="evidence" value="ECO:0007669"/>
    <property type="project" value="UniProtKB-UniRule"/>
</dbReference>
<dbReference type="GO" id="GO:0006400">
    <property type="term" value="P:tRNA modification"/>
    <property type="evidence" value="ECO:0007669"/>
    <property type="project" value="UniProtKB-UniRule"/>
</dbReference>
<dbReference type="CDD" id="cd01518">
    <property type="entry name" value="RHOD_YceA"/>
    <property type="match status" value="1"/>
</dbReference>
<dbReference type="Gene3D" id="3.30.70.100">
    <property type="match status" value="1"/>
</dbReference>
<dbReference type="Gene3D" id="3.40.250.10">
    <property type="entry name" value="Rhodanese-like domain"/>
    <property type="match status" value="1"/>
</dbReference>
<dbReference type="HAMAP" id="MF_00469">
    <property type="entry name" value="TrhO"/>
    <property type="match status" value="1"/>
</dbReference>
<dbReference type="InterPro" id="IPR001763">
    <property type="entry name" value="Rhodanese-like_dom"/>
</dbReference>
<dbReference type="InterPro" id="IPR036873">
    <property type="entry name" value="Rhodanese-like_dom_sf"/>
</dbReference>
<dbReference type="InterPro" id="IPR022111">
    <property type="entry name" value="Rhodanese_C"/>
</dbReference>
<dbReference type="InterPro" id="IPR020936">
    <property type="entry name" value="TrhO"/>
</dbReference>
<dbReference type="InterPro" id="IPR040503">
    <property type="entry name" value="TRHO_N"/>
</dbReference>
<dbReference type="NCBIfam" id="NF001135">
    <property type="entry name" value="PRK00142.1-3"/>
    <property type="match status" value="1"/>
</dbReference>
<dbReference type="PANTHER" id="PTHR43268:SF3">
    <property type="entry name" value="RHODANESE-LIKE DOMAIN-CONTAINING PROTEIN 7-RELATED"/>
    <property type="match status" value="1"/>
</dbReference>
<dbReference type="PANTHER" id="PTHR43268">
    <property type="entry name" value="THIOSULFATE SULFURTRANSFERASE/RHODANESE-LIKE DOMAIN-CONTAINING PROTEIN 2"/>
    <property type="match status" value="1"/>
</dbReference>
<dbReference type="Pfam" id="PF00581">
    <property type="entry name" value="Rhodanese"/>
    <property type="match status" value="1"/>
</dbReference>
<dbReference type="Pfam" id="PF12368">
    <property type="entry name" value="Rhodanese_C"/>
    <property type="match status" value="1"/>
</dbReference>
<dbReference type="Pfam" id="PF17773">
    <property type="entry name" value="UPF0176_N"/>
    <property type="match status" value="1"/>
</dbReference>
<dbReference type="SMART" id="SM00450">
    <property type="entry name" value="RHOD"/>
    <property type="match status" value="1"/>
</dbReference>
<dbReference type="SUPFAM" id="SSF52821">
    <property type="entry name" value="Rhodanese/Cell cycle control phosphatase"/>
    <property type="match status" value="1"/>
</dbReference>
<dbReference type="PROSITE" id="PS50206">
    <property type="entry name" value="RHODANESE_3"/>
    <property type="match status" value="1"/>
</dbReference>
<keyword id="KW-0560">Oxidoreductase</keyword>
<keyword id="KW-0819">tRNA processing</keyword>
<gene>
    <name evidence="1" type="primary">trhO</name>
    <name type="ordered locus">SACOL2713</name>
</gene>
<protein>
    <recommendedName>
        <fullName evidence="1">tRNA uridine(34) hydroxylase</fullName>
        <ecNumber evidence="1">1.14.-.-</ecNumber>
    </recommendedName>
    <alternativeName>
        <fullName evidence="1">tRNA hydroxylation protein O</fullName>
    </alternativeName>
</protein>
<proteinExistence type="inferred from homology"/>
<name>TRHO_STAAC</name>
<feature type="chain" id="PRO_0000161513" description="tRNA uridine(34) hydroxylase">
    <location>
        <begin position="1"/>
        <end position="318"/>
    </location>
</feature>
<feature type="domain" description="Rhodanese" evidence="1">
    <location>
        <begin position="123"/>
        <end position="217"/>
    </location>
</feature>
<feature type="active site" description="Cysteine persulfide intermediate" evidence="1">
    <location>
        <position position="177"/>
    </location>
</feature>
<evidence type="ECO:0000255" key="1">
    <source>
        <dbReference type="HAMAP-Rule" id="MF_00469"/>
    </source>
</evidence>
<comment type="function">
    <text evidence="1">Catalyzes oxygen-dependent 5-hydroxyuridine (ho5U) modification at position 34 in tRNAs.</text>
</comment>
<comment type="catalytic activity">
    <reaction evidence="1">
        <text>uridine(34) in tRNA + AH2 + O2 = 5-hydroxyuridine(34) in tRNA + A + H2O</text>
        <dbReference type="Rhea" id="RHEA:64224"/>
        <dbReference type="Rhea" id="RHEA-COMP:11727"/>
        <dbReference type="Rhea" id="RHEA-COMP:13381"/>
        <dbReference type="ChEBI" id="CHEBI:13193"/>
        <dbReference type="ChEBI" id="CHEBI:15377"/>
        <dbReference type="ChEBI" id="CHEBI:15379"/>
        <dbReference type="ChEBI" id="CHEBI:17499"/>
        <dbReference type="ChEBI" id="CHEBI:65315"/>
        <dbReference type="ChEBI" id="CHEBI:136877"/>
    </reaction>
</comment>
<comment type="similarity">
    <text evidence="1">Belongs to the TrhO family.</text>
</comment>
<accession>Q5HCK8</accession>
<organism>
    <name type="scientific">Staphylococcus aureus (strain COL)</name>
    <dbReference type="NCBI Taxonomy" id="93062"/>
    <lineage>
        <taxon>Bacteria</taxon>
        <taxon>Bacillati</taxon>
        <taxon>Bacillota</taxon>
        <taxon>Bacilli</taxon>
        <taxon>Bacillales</taxon>
        <taxon>Staphylococcaceae</taxon>
        <taxon>Staphylococcus</taxon>
    </lineage>
</organism>